<gene>
    <name type="primary">CHI</name>
</gene>
<organism>
    <name type="scientific">Dianthus caryophyllus</name>
    <name type="common">Carnation</name>
    <name type="synonym">Clove pink</name>
    <dbReference type="NCBI Taxonomy" id="3570"/>
    <lineage>
        <taxon>Eukaryota</taxon>
        <taxon>Viridiplantae</taxon>
        <taxon>Streptophyta</taxon>
        <taxon>Embryophyta</taxon>
        <taxon>Tracheophyta</taxon>
        <taxon>Spermatophyta</taxon>
        <taxon>Magnoliopsida</taxon>
        <taxon>eudicotyledons</taxon>
        <taxon>Gunneridae</taxon>
        <taxon>Pentapetalae</taxon>
        <taxon>Caryophyllales</taxon>
        <taxon>Caryophyllaceae</taxon>
        <taxon>Caryophylleae</taxon>
        <taxon>Dianthus</taxon>
    </lineage>
</organism>
<accession>Q43754</accession>
<protein>
    <recommendedName>
        <fullName>Chalcone--flavanone isomerase</fullName>
        <shortName>Chalcone isomerase</shortName>
        <ecNumber>5.5.1.6</ecNumber>
    </recommendedName>
</protein>
<proteinExistence type="evidence at transcript level"/>
<evidence type="ECO:0000250" key="1"/>
<evidence type="ECO:0000305" key="2"/>
<dbReference type="EC" id="5.5.1.6"/>
<dbReference type="EMBL" id="Z67989">
    <property type="protein sequence ID" value="CAA91931.1"/>
    <property type="molecule type" value="mRNA"/>
</dbReference>
<dbReference type="PIR" id="T10712">
    <property type="entry name" value="T10712"/>
</dbReference>
<dbReference type="SMR" id="Q43754"/>
<dbReference type="UniPathway" id="UPA00154"/>
<dbReference type="GO" id="GO:0045430">
    <property type="term" value="F:chalcone isomerase activity"/>
    <property type="evidence" value="ECO:0007669"/>
    <property type="project" value="UniProtKB-EC"/>
</dbReference>
<dbReference type="GO" id="GO:0009813">
    <property type="term" value="P:flavonoid biosynthetic process"/>
    <property type="evidence" value="ECO:0007669"/>
    <property type="project" value="UniProtKB-UniPathway"/>
</dbReference>
<dbReference type="Gene3D" id="1.10.890.20">
    <property type="match status" value="1"/>
</dbReference>
<dbReference type="Gene3D" id="3.50.70.10">
    <property type="match status" value="1"/>
</dbReference>
<dbReference type="InterPro" id="IPR044164">
    <property type="entry name" value="CFI"/>
</dbReference>
<dbReference type="InterPro" id="IPR016087">
    <property type="entry name" value="Chalcone_isomerase"/>
</dbReference>
<dbReference type="InterPro" id="IPR016088">
    <property type="entry name" value="Chalcone_isomerase_3-sand"/>
</dbReference>
<dbReference type="InterPro" id="IPR016089">
    <property type="entry name" value="Chalcone_isomerase_bundle_sf"/>
</dbReference>
<dbReference type="InterPro" id="IPR036298">
    <property type="entry name" value="Chalcone_isomerase_sf"/>
</dbReference>
<dbReference type="PANTHER" id="PTHR28039:SF8">
    <property type="entry name" value="CHALCONE--FLAVANONE ISOMERASE 1-RELATED"/>
    <property type="match status" value="1"/>
</dbReference>
<dbReference type="PANTHER" id="PTHR28039">
    <property type="entry name" value="CHALCONE--FLAVONONE ISOMERASE 1-RELATED"/>
    <property type="match status" value="1"/>
</dbReference>
<dbReference type="Pfam" id="PF02431">
    <property type="entry name" value="Chalcone"/>
    <property type="match status" value="1"/>
</dbReference>
<dbReference type="SUPFAM" id="SSF54626">
    <property type="entry name" value="Chalcone isomerase"/>
    <property type="match status" value="1"/>
</dbReference>
<sequence>MAEITQIQVESHVFPPEVKPPGSDKTFFLGGAGVRGLEIQGKFIKFTAIAVYIEDDAVSSLAVKWKGKTADELTDSVDFFKDIVTGPFEKFTQVTMILPLTGQQYSEKVVENCVAHWKSVGTYTDAESEATQKFLQVFKNVSNPPGASILFTQSPLGSLTISFSKDGSLPENGKEVIVNKQLSEAVLQSIIGKHGVSPEAKKSLSARLSDLINQHENPKKE</sequence>
<reference key="1">
    <citation type="submission" date="1995-11" db="EMBL/GenBank/DDBJ databases">
        <authorList>
            <person name="Henkel J."/>
            <person name="Ruhnau-Brich B."/>
            <person name="Dedio J."/>
            <person name="Wassenegger M."/>
            <person name="Sommer H."/>
            <person name="Forkmann G."/>
        </authorList>
    </citation>
    <scope>NUCLEOTIDE SEQUENCE [MRNA]</scope>
    <source>
        <strain>cv. Tanga</strain>
        <tissue>Petal</tissue>
    </source>
</reference>
<keyword id="KW-0284">Flavonoid biosynthesis</keyword>
<keyword id="KW-0413">Isomerase</keyword>
<feature type="chain" id="PRO_0000166430" description="Chalcone--flavanone isomerase">
    <location>
        <begin position="1"/>
        <end position="221"/>
    </location>
</feature>
<feature type="binding site" evidence="1">
    <location>
        <position position="47"/>
    </location>
    <ligand>
        <name>substrate</name>
    </ligand>
</feature>
<feature type="binding site" evidence="1">
    <location>
        <position position="112"/>
    </location>
    <ligand>
        <name>substrate</name>
    </ligand>
</feature>
<feature type="binding site" evidence="1">
    <location>
        <position position="189"/>
    </location>
    <ligand>
        <name>substrate</name>
    </ligand>
</feature>
<feature type="site" description="Important for catalytic activity" evidence="1">
    <location>
        <position position="105"/>
    </location>
</feature>
<name>CFI_DIACA</name>
<comment type="function">
    <text evidence="1">Catalyzes the intramolecular cyclization of bicyclic chalcones into tricyclic (S)-flavanones. Responsible for the isomerization of 4,2',4',6'-tetrahydroxychalcone (also termed chalcone) into naringenin (By similarity).</text>
</comment>
<comment type="catalytic activity">
    <reaction>
        <text>a chalcone = a flavanone.</text>
        <dbReference type="EC" id="5.5.1.6"/>
    </reaction>
</comment>
<comment type="pathway">
    <text>Secondary metabolite biosynthesis; flavonoid biosynthesis.</text>
</comment>
<comment type="miscellaneous">
    <text>Part of the biosynthetic pathway for all classes of flavonoids, a large class of secondary plant metabolites, many of which are brightly colored.</text>
</comment>
<comment type="similarity">
    <text evidence="2">Belongs to the chalcone isomerase family.</text>
</comment>